<geneLocation type="chloroplast"/>
<proteinExistence type="inferred from homology"/>
<organism>
    <name type="scientific">Pelargonium hortorum</name>
    <name type="common">Common geranium</name>
    <name type="synonym">Pelargonium inquinans x Pelargonium zonale</name>
    <dbReference type="NCBI Taxonomy" id="4031"/>
    <lineage>
        <taxon>Eukaryota</taxon>
        <taxon>Viridiplantae</taxon>
        <taxon>Streptophyta</taxon>
        <taxon>Embryophyta</taxon>
        <taxon>Tracheophyta</taxon>
        <taxon>Spermatophyta</taxon>
        <taxon>Magnoliopsida</taxon>
        <taxon>eudicotyledons</taxon>
        <taxon>Gunneridae</taxon>
        <taxon>Pentapetalae</taxon>
        <taxon>rosids</taxon>
        <taxon>malvids</taxon>
        <taxon>Geraniales</taxon>
        <taxon>Geraniaceae</taxon>
        <taxon>Pelargonium</taxon>
    </lineage>
</organism>
<accession>Q06FW1</accession>
<reference key="1">
    <citation type="journal article" date="2006" name="Mol. Biol. Evol.">
        <title>The complete chloroplast genome sequence of Pelargonium x hortorum: organization and evolution of the largest and most highly rearranged chloroplast genome of land plants.</title>
        <authorList>
            <person name="Chumley T.W."/>
            <person name="Palmer J.D."/>
            <person name="Mower J.P."/>
            <person name="Fourcade H.M."/>
            <person name="Calie P.J."/>
            <person name="Boore J.L."/>
            <person name="Jansen R.K."/>
        </authorList>
    </citation>
    <scope>NUCLEOTIDE SEQUENCE [LARGE SCALE GENOMIC DNA]</scope>
    <source>
        <strain>cv. Ringo White</strain>
    </source>
</reference>
<gene>
    <name evidence="2" type="primary">psbD</name>
</gene>
<evidence type="ECO:0000250" key="1">
    <source>
        <dbReference type="UniProtKB" id="P56761"/>
    </source>
</evidence>
<evidence type="ECO:0000255" key="2">
    <source>
        <dbReference type="HAMAP-Rule" id="MF_01383"/>
    </source>
</evidence>
<keyword id="KW-0007">Acetylation</keyword>
<keyword id="KW-0148">Chlorophyll</keyword>
<keyword id="KW-0150">Chloroplast</keyword>
<keyword id="KW-0157">Chromophore</keyword>
<keyword id="KW-0249">Electron transport</keyword>
<keyword id="KW-0408">Iron</keyword>
<keyword id="KW-0460">Magnesium</keyword>
<keyword id="KW-0472">Membrane</keyword>
<keyword id="KW-0479">Metal-binding</keyword>
<keyword id="KW-0560">Oxidoreductase</keyword>
<keyword id="KW-0597">Phosphoprotein</keyword>
<keyword id="KW-0602">Photosynthesis</keyword>
<keyword id="KW-0604">Photosystem II</keyword>
<keyword id="KW-0934">Plastid</keyword>
<keyword id="KW-0793">Thylakoid</keyword>
<keyword id="KW-0812">Transmembrane</keyword>
<keyword id="KW-1133">Transmembrane helix</keyword>
<keyword id="KW-0813">Transport</keyword>
<sequence length="353" mass="39529">MTIALGKFTKEENDLFDIMDDWLRRDRFVFVGWSGLLLFPCAYFALGGWFTGTTFVTSWYTHGLASSYLEGCNFLTAAVSTPANSLAHSLLLLWGPEAQGDLTRWCQLGGLWTFVALHGAFGLIGFMLRQFELARSVQLRPYNAIAFSGPIAVFVSVFLIYPLGQSGWFFAPSFGVAAIFRFILFFQGFHNWTLNPFHMMGVAGVLGAALLCAIHGATVENTLFEDGDGANTFRAFNPTQAEETYSMVTANRFWSQIFGVAFSNKRWLHFFMLFVPVTGLWMSALGVVGLALNLRAYDFVSQEIRAAEDPEFETFYTKNILLNEGIRAWMAAQDQPHENLIFPEEVLPRGNAL</sequence>
<name>PSBD_PELHO</name>
<feature type="initiator methionine" description="Removed" evidence="1">
    <location>
        <position position="1"/>
    </location>
</feature>
<feature type="chain" id="PRO_0000359683" description="Photosystem II D2 protein">
    <location>
        <begin position="2"/>
        <end position="353"/>
    </location>
</feature>
<feature type="transmembrane region" description="Helical" evidence="2">
    <location>
        <begin position="41"/>
        <end position="61"/>
    </location>
</feature>
<feature type="transmembrane region" description="Helical" evidence="2">
    <location>
        <begin position="125"/>
        <end position="141"/>
    </location>
</feature>
<feature type="transmembrane region" description="Helical" evidence="2">
    <location>
        <begin position="153"/>
        <end position="166"/>
    </location>
</feature>
<feature type="transmembrane region" description="Helical" evidence="2">
    <location>
        <begin position="208"/>
        <end position="228"/>
    </location>
</feature>
<feature type="transmembrane region" description="Helical" evidence="2">
    <location>
        <begin position="279"/>
        <end position="295"/>
    </location>
</feature>
<feature type="binding site" description="axial binding residue" evidence="2">
    <location>
        <position position="118"/>
    </location>
    <ligand>
        <name>chlorophyll a</name>
        <dbReference type="ChEBI" id="CHEBI:58416"/>
        <label>ChlzD2</label>
    </ligand>
    <ligandPart>
        <name>Mg</name>
        <dbReference type="ChEBI" id="CHEBI:25107"/>
    </ligandPart>
</feature>
<feature type="binding site" evidence="2">
    <location>
        <position position="130"/>
    </location>
    <ligand>
        <name>pheophytin a</name>
        <dbReference type="ChEBI" id="CHEBI:136840"/>
        <label>D2</label>
    </ligand>
</feature>
<feature type="binding site" evidence="2">
    <location>
        <position position="143"/>
    </location>
    <ligand>
        <name>pheophytin a</name>
        <dbReference type="ChEBI" id="CHEBI:136840"/>
        <label>D2</label>
    </ligand>
</feature>
<feature type="binding site" description="axial binding residue" evidence="2">
    <location>
        <position position="198"/>
    </location>
    <ligand>
        <name>chlorophyll a</name>
        <dbReference type="ChEBI" id="CHEBI:58416"/>
        <label>PD2</label>
    </ligand>
    <ligandPart>
        <name>Mg</name>
        <dbReference type="ChEBI" id="CHEBI:25107"/>
    </ligandPart>
</feature>
<feature type="binding site" evidence="2">
    <location>
        <position position="215"/>
    </location>
    <ligand>
        <name>a plastoquinone</name>
        <dbReference type="ChEBI" id="CHEBI:17757"/>
        <label>Q(A)</label>
    </ligand>
</feature>
<feature type="binding site" evidence="2">
    <location>
        <position position="215"/>
    </location>
    <ligand>
        <name>Fe cation</name>
        <dbReference type="ChEBI" id="CHEBI:24875"/>
        <note>ligand shared with heterodimeric partner</note>
    </ligand>
</feature>
<feature type="binding site" evidence="2">
    <location>
        <position position="262"/>
    </location>
    <ligand>
        <name>a plastoquinone</name>
        <dbReference type="ChEBI" id="CHEBI:17757"/>
        <label>Q(A)</label>
    </ligand>
</feature>
<feature type="binding site" evidence="2">
    <location>
        <position position="269"/>
    </location>
    <ligand>
        <name>Fe cation</name>
        <dbReference type="ChEBI" id="CHEBI:24875"/>
        <note>ligand shared with heterodimeric partner</note>
    </ligand>
</feature>
<feature type="modified residue" description="N-acetylthreonine" evidence="1">
    <location>
        <position position="2"/>
    </location>
</feature>
<feature type="modified residue" description="Phosphothreonine" evidence="1">
    <location>
        <position position="2"/>
    </location>
</feature>
<dbReference type="EC" id="1.10.3.9" evidence="2"/>
<dbReference type="EMBL" id="DQ897681">
    <property type="protein sequence ID" value="ABI17261.1"/>
    <property type="molecule type" value="Genomic_DNA"/>
</dbReference>
<dbReference type="RefSeq" id="YP_784070.1">
    <property type="nucleotide sequence ID" value="NC_008454.1"/>
</dbReference>
<dbReference type="SMR" id="Q06FW1"/>
<dbReference type="GeneID" id="4362906"/>
<dbReference type="GO" id="GO:0009535">
    <property type="term" value="C:chloroplast thylakoid membrane"/>
    <property type="evidence" value="ECO:0007669"/>
    <property type="project" value="UniProtKB-SubCell"/>
</dbReference>
<dbReference type="GO" id="GO:0009523">
    <property type="term" value="C:photosystem II"/>
    <property type="evidence" value="ECO:0007669"/>
    <property type="project" value="UniProtKB-KW"/>
</dbReference>
<dbReference type="GO" id="GO:0016168">
    <property type="term" value="F:chlorophyll binding"/>
    <property type="evidence" value="ECO:0007669"/>
    <property type="project" value="UniProtKB-UniRule"/>
</dbReference>
<dbReference type="GO" id="GO:0045156">
    <property type="term" value="F:electron transporter, transferring electrons within the cyclic electron transport pathway of photosynthesis activity"/>
    <property type="evidence" value="ECO:0007669"/>
    <property type="project" value="InterPro"/>
</dbReference>
<dbReference type="GO" id="GO:0005506">
    <property type="term" value="F:iron ion binding"/>
    <property type="evidence" value="ECO:0007669"/>
    <property type="project" value="UniProtKB-UniRule"/>
</dbReference>
<dbReference type="GO" id="GO:0010242">
    <property type="term" value="F:oxygen evolving activity"/>
    <property type="evidence" value="ECO:0007669"/>
    <property type="project" value="UniProtKB-EC"/>
</dbReference>
<dbReference type="GO" id="GO:0009772">
    <property type="term" value="P:photosynthetic electron transport in photosystem II"/>
    <property type="evidence" value="ECO:0007669"/>
    <property type="project" value="InterPro"/>
</dbReference>
<dbReference type="CDD" id="cd09288">
    <property type="entry name" value="Photosystem-II_D2"/>
    <property type="match status" value="1"/>
</dbReference>
<dbReference type="FunFam" id="1.20.85.10:FF:000001">
    <property type="entry name" value="photosystem II D2 protein-like"/>
    <property type="match status" value="1"/>
</dbReference>
<dbReference type="Gene3D" id="1.20.85.10">
    <property type="entry name" value="Photosystem II protein D1-like"/>
    <property type="match status" value="1"/>
</dbReference>
<dbReference type="HAMAP" id="MF_01383">
    <property type="entry name" value="PSII_PsbD_D2"/>
    <property type="match status" value="1"/>
</dbReference>
<dbReference type="InterPro" id="IPR055266">
    <property type="entry name" value="D1/D2"/>
</dbReference>
<dbReference type="InterPro" id="IPR036854">
    <property type="entry name" value="Photo_II_D1/D2_sf"/>
</dbReference>
<dbReference type="InterPro" id="IPR000484">
    <property type="entry name" value="Photo_RC_L/M"/>
</dbReference>
<dbReference type="InterPro" id="IPR055265">
    <property type="entry name" value="Photo_RC_L/M_CS"/>
</dbReference>
<dbReference type="InterPro" id="IPR005868">
    <property type="entry name" value="PSII_PsbD/D2"/>
</dbReference>
<dbReference type="NCBIfam" id="TIGR01152">
    <property type="entry name" value="psbD"/>
    <property type="match status" value="1"/>
</dbReference>
<dbReference type="PANTHER" id="PTHR33149:SF12">
    <property type="entry name" value="PHOTOSYSTEM II D2 PROTEIN"/>
    <property type="match status" value="1"/>
</dbReference>
<dbReference type="PANTHER" id="PTHR33149">
    <property type="entry name" value="PHOTOSYSTEM II PROTEIN D1"/>
    <property type="match status" value="1"/>
</dbReference>
<dbReference type="Pfam" id="PF00124">
    <property type="entry name" value="Photo_RC"/>
    <property type="match status" value="1"/>
</dbReference>
<dbReference type="PRINTS" id="PR00256">
    <property type="entry name" value="REACTNCENTRE"/>
</dbReference>
<dbReference type="SUPFAM" id="SSF81483">
    <property type="entry name" value="Bacterial photosystem II reaction centre, L and M subunits"/>
    <property type="match status" value="1"/>
</dbReference>
<dbReference type="PROSITE" id="PS00244">
    <property type="entry name" value="REACTION_CENTER"/>
    <property type="match status" value="1"/>
</dbReference>
<protein>
    <recommendedName>
        <fullName evidence="2">Photosystem II D2 protein</fullName>
        <shortName evidence="2">PSII D2 protein</shortName>
        <ecNumber evidence="2">1.10.3.9</ecNumber>
    </recommendedName>
    <alternativeName>
        <fullName evidence="2">Photosystem Q(A) protein</fullName>
    </alternativeName>
</protein>
<comment type="function">
    <text evidence="2">Photosystem II (PSII) is a light-driven water:plastoquinone oxidoreductase that uses light energy to abstract electrons from H(2)O, generating O(2) and a proton gradient subsequently used for ATP formation. It consists of a core antenna complex that captures photons, and an electron transfer chain that converts photonic excitation into a charge separation. The D1/D2 (PsbA/PsbD) reaction center heterodimer binds P680, the primary electron donor of PSII as well as several subsequent electron acceptors. D2 is needed for assembly of a stable PSII complex.</text>
</comment>
<comment type="catalytic activity">
    <reaction evidence="2">
        <text>2 a plastoquinone + 4 hnu + 2 H2O = 2 a plastoquinol + O2</text>
        <dbReference type="Rhea" id="RHEA:36359"/>
        <dbReference type="Rhea" id="RHEA-COMP:9561"/>
        <dbReference type="Rhea" id="RHEA-COMP:9562"/>
        <dbReference type="ChEBI" id="CHEBI:15377"/>
        <dbReference type="ChEBI" id="CHEBI:15379"/>
        <dbReference type="ChEBI" id="CHEBI:17757"/>
        <dbReference type="ChEBI" id="CHEBI:30212"/>
        <dbReference type="ChEBI" id="CHEBI:62192"/>
        <dbReference type="EC" id="1.10.3.9"/>
    </reaction>
</comment>
<comment type="cofactor">
    <text evidence="2">The D1/D2 heterodimer binds P680, chlorophylls that are the primary electron donor of PSII, and subsequent electron acceptors. It shares a non-heme iron and each subunit binds pheophytin, quinone, additional chlorophylls, carotenoids and lipids. There is also a Cl(-1) ion associated with D1 and D2, which is required for oxygen evolution. The PSII complex binds additional chlorophylls, carotenoids and specific lipids.</text>
</comment>
<comment type="subunit">
    <text evidence="2">PSII is composed of 1 copy each of membrane proteins PsbA, PsbB, PsbC, PsbD, PsbE, PsbF, PsbH, PsbI, PsbJ, PsbK, PsbL, PsbM, PsbT, PsbX, PsbY, PsbZ, Psb30/Ycf12, at least 3 peripheral proteins of the oxygen-evolving complex and a large number of cofactors. It forms dimeric complexes.</text>
</comment>
<comment type="subcellular location">
    <subcellularLocation>
        <location evidence="2">Plastid</location>
        <location evidence="2">Chloroplast thylakoid membrane</location>
        <topology evidence="2">Multi-pass membrane protein</topology>
    </subcellularLocation>
</comment>
<comment type="miscellaneous">
    <text evidence="2">2 of the reaction center chlorophylls (ChlD1 and ChlD2) are entirely coordinated by water.</text>
</comment>
<comment type="similarity">
    <text evidence="2">Belongs to the reaction center PufL/M/PsbA/D family.</text>
</comment>